<sequence>MSRVANSPVQLPSGVELKQNGQDVTVKGGKGQLAIQIHDSVELKIEENVVTFAARDGAKASRAMAGTMRALVNNMVTGVSQGFEKKLVLNGVGYRAKAAGSTLNLTLGFSHPIDYDLPEGVTAETPTQTEILLKSANKQLLGQVASEVRAFRPPEPYKGKGVRYADEFVRRKEAKKK</sequence>
<feature type="chain" id="PRO_1000214938" description="Large ribosomal subunit protein uL6">
    <location>
        <begin position="1"/>
        <end position="177"/>
    </location>
</feature>
<comment type="function">
    <text evidence="1">This protein binds to the 23S rRNA, and is important in its secondary structure. It is located near the subunit interface in the base of the L7/L12 stalk, and near the tRNA binding site of the peptidyltransferase center.</text>
</comment>
<comment type="subunit">
    <text evidence="1">Part of the 50S ribosomal subunit.</text>
</comment>
<comment type="similarity">
    <text evidence="1">Belongs to the universal ribosomal protein uL6 family.</text>
</comment>
<protein>
    <recommendedName>
        <fullName evidence="1">Large ribosomal subunit protein uL6</fullName>
    </recommendedName>
    <alternativeName>
        <fullName evidence="2">50S ribosomal protein L6</fullName>
    </alternativeName>
</protein>
<accession>C5BQ76</accession>
<dbReference type="EMBL" id="CP001614">
    <property type="protein sequence ID" value="ACR13861.1"/>
    <property type="molecule type" value="Genomic_DNA"/>
</dbReference>
<dbReference type="RefSeq" id="WP_015819976.1">
    <property type="nucleotide sequence ID" value="NC_012997.1"/>
</dbReference>
<dbReference type="SMR" id="C5BQ76"/>
<dbReference type="STRING" id="377629.TERTU_0923"/>
<dbReference type="KEGG" id="ttu:TERTU_0923"/>
<dbReference type="eggNOG" id="COG0097">
    <property type="taxonomic scope" value="Bacteria"/>
</dbReference>
<dbReference type="HOGENOM" id="CLU_065464_1_2_6"/>
<dbReference type="OrthoDB" id="9805007at2"/>
<dbReference type="Proteomes" id="UP000009080">
    <property type="component" value="Chromosome"/>
</dbReference>
<dbReference type="GO" id="GO:0022625">
    <property type="term" value="C:cytosolic large ribosomal subunit"/>
    <property type="evidence" value="ECO:0007669"/>
    <property type="project" value="TreeGrafter"/>
</dbReference>
<dbReference type="GO" id="GO:0019843">
    <property type="term" value="F:rRNA binding"/>
    <property type="evidence" value="ECO:0007669"/>
    <property type="project" value="UniProtKB-UniRule"/>
</dbReference>
<dbReference type="GO" id="GO:0003735">
    <property type="term" value="F:structural constituent of ribosome"/>
    <property type="evidence" value="ECO:0007669"/>
    <property type="project" value="InterPro"/>
</dbReference>
<dbReference type="GO" id="GO:0002181">
    <property type="term" value="P:cytoplasmic translation"/>
    <property type="evidence" value="ECO:0007669"/>
    <property type="project" value="TreeGrafter"/>
</dbReference>
<dbReference type="FunFam" id="3.90.930.12:FF:000001">
    <property type="entry name" value="50S ribosomal protein L6"/>
    <property type="match status" value="1"/>
</dbReference>
<dbReference type="FunFam" id="3.90.930.12:FF:000002">
    <property type="entry name" value="50S ribosomal protein L6"/>
    <property type="match status" value="1"/>
</dbReference>
<dbReference type="Gene3D" id="3.90.930.12">
    <property type="entry name" value="Ribosomal protein L6, alpha-beta domain"/>
    <property type="match status" value="2"/>
</dbReference>
<dbReference type="HAMAP" id="MF_01365_B">
    <property type="entry name" value="Ribosomal_uL6_B"/>
    <property type="match status" value="1"/>
</dbReference>
<dbReference type="InterPro" id="IPR000702">
    <property type="entry name" value="Ribosomal_uL6-like"/>
</dbReference>
<dbReference type="InterPro" id="IPR036789">
    <property type="entry name" value="Ribosomal_uL6-like_a/b-dom_sf"/>
</dbReference>
<dbReference type="InterPro" id="IPR020040">
    <property type="entry name" value="Ribosomal_uL6_a/b-dom"/>
</dbReference>
<dbReference type="InterPro" id="IPR019906">
    <property type="entry name" value="Ribosomal_uL6_bac-type"/>
</dbReference>
<dbReference type="InterPro" id="IPR002358">
    <property type="entry name" value="Ribosomal_uL6_CS"/>
</dbReference>
<dbReference type="NCBIfam" id="TIGR03654">
    <property type="entry name" value="L6_bact"/>
    <property type="match status" value="1"/>
</dbReference>
<dbReference type="PANTHER" id="PTHR11655">
    <property type="entry name" value="60S/50S RIBOSOMAL PROTEIN L6/L9"/>
    <property type="match status" value="1"/>
</dbReference>
<dbReference type="PANTHER" id="PTHR11655:SF14">
    <property type="entry name" value="LARGE RIBOSOMAL SUBUNIT PROTEIN UL6M"/>
    <property type="match status" value="1"/>
</dbReference>
<dbReference type="Pfam" id="PF00347">
    <property type="entry name" value="Ribosomal_L6"/>
    <property type="match status" value="2"/>
</dbReference>
<dbReference type="PIRSF" id="PIRSF002162">
    <property type="entry name" value="Ribosomal_L6"/>
    <property type="match status" value="1"/>
</dbReference>
<dbReference type="PRINTS" id="PR00059">
    <property type="entry name" value="RIBOSOMALL6"/>
</dbReference>
<dbReference type="SUPFAM" id="SSF56053">
    <property type="entry name" value="Ribosomal protein L6"/>
    <property type="match status" value="2"/>
</dbReference>
<dbReference type="PROSITE" id="PS00525">
    <property type="entry name" value="RIBOSOMAL_L6_1"/>
    <property type="match status" value="1"/>
</dbReference>
<proteinExistence type="inferred from homology"/>
<gene>
    <name evidence="1" type="primary">rplF</name>
    <name type="ordered locus">TERTU_0923</name>
</gene>
<organism>
    <name type="scientific">Teredinibacter turnerae (strain ATCC 39867 / T7901)</name>
    <dbReference type="NCBI Taxonomy" id="377629"/>
    <lineage>
        <taxon>Bacteria</taxon>
        <taxon>Pseudomonadati</taxon>
        <taxon>Pseudomonadota</taxon>
        <taxon>Gammaproteobacteria</taxon>
        <taxon>Cellvibrionales</taxon>
        <taxon>Cellvibrionaceae</taxon>
        <taxon>Teredinibacter</taxon>
    </lineage>
</organism>
<reference key="1">
    <citation type="journal article" date="2009" name="PLoS ONE">
        <title>The complete genome of Teredinibacter turnerae T7901: an intracellular endosymbiont of marine wood-boring bivalves (shipworms).</title>
        <authorList>
            <person name="Yang J.C."/>
            <person name="Madupu R."/>
            <person name="Durkin A.S."/>
            <person name="Ekborg N.A."/>
            <person name="Pedamallu C.S."/>
            <person name="Hostetler J.B."/>
            <person name="Radune D."/>
            <person name="Toms B.S."/>
            <person name="Henrissat B."/>
            <person name="Coutinho P.M."/>
            <person name="Schwarz S."/>
            <person name="Field L."/>
            <person name="Trindade-Silva A.E."/>
            <person name="Soares C.A.G."/>
            <person name="Elshahawi S."/>
            <person name="Hanora A."/>
            <person name="Schmidt E.W."/>
            <person name="Haygood M.G."/>
            <person name="Posfai J."/>
            <person name="Benner J."/>
            <person name="Madinger C."/>
            <person name="Nove J."/>
            <person name="Anton B."/>
            <person name="Chaudhary K."/>
            <person name="Foster J."/>
            <person name="Holman A."/>
            <person name="Kumar S."/>
            <person name="Lessard P.A."/>
            <person name="Luyten Y.A."/>
            <person name="Slatko B."/>
            <person name="Wood N."/>
            <person name="Wu B."/>
            <person name="Teplitski M."/>
            <person name="Mougous J.D."/>
            <person name="Ward N."/>
            <person name="Eisen J.A."/>
            <person name="Badger J.H."/>
            <person name="Distel D.L."/>
        </authorList>
    </citation>
    <scope>NUCLEOTIDE SEQUENCE [LARGE SCALE GENOMIC DNA]</scope>
    <source>
        <strain>ATCC 39867 / T7901</strain>
    </source>
</reference>
<keyword id="KW-1185">Reference proteome</keyword>
<keyword id="KW-0687">Ribonucleoprotein</keyword>
<keyword id="KW-0689">Ribosomal protein</keyword>
<keyword id="KW-0694">RNA-binding</keyword>
<keyword id="KW-0699">rRNA-binding</keyword>
<evidence type="ECO:0000255" key="1">
    <source>
        <dbReference type="HAMAP-Rule" id="MF_01365"/>
    </source>
</evidence>
<evidence type="ECO:0000305" key="2"/>
<name>RL6_TERTT</name>